<sequence length="310" mass="35350">MAKKKMGLLVMAYGTPYKEEDIERYYTHIRHGRKPSSELLEDLKQRYKAIGGISPLAKITLEQAKQLEKRLNDIQDDIEFQMYLGLKHIEPFVEDAVRQMHEDGIKEAVSIVLAPHFSTFSIQSYNERAKAEAKKLGGPVIYTIDSWHDEPKFIDYWVEKVKEVYASMTEEEREKAVLIVSAHSLPEKIIAAGDPYPQQLAETAKLIAEKAGVKHYAVGWQSAGNTPEPWLGPDVQDLTRQLHQEKGYTSFVYVPVGFVADHLEVLYDNDIECKQVTEEIGANYYRPEMPNANPKFIDALATVVLKRIKL</sequence>
<gene>
    <name evidence="1" type="primary">cpfC</name>
    <name type="ordered locus">GWCH70_0650</name>
</gene>
<feature type="chain" id="PRO_1000205154" description="Coproporphyrin III ferrochelatase">
    <location>
        <begin position="1"/>
        <end position="310"/>
    </location>
</feature>
<feature type="binding site" description="axial binding residue" evidence="1">
    <location>
        <position position="13"/>
    </location>
    <ligand>
        <name>Fe-coproporphyrin III</name>
        <dbReference type="ChEBI" id="CHEBI:68438"/>
    </ligand>
    <ligandPart>
        <name>Fe</name>
        <dbReference type="ChEBI" id="CHEBI:18248"/>
    </ligandPart>
</feature>
<feature type="binding site" evidence="1">
    <location>
        <position position="30"/>
    </location>
    <ligand>
        <name>Fe-coproporphyrin III</name>
        <dbReference type="ChEBI" id="CHEBI:68438"/>
    </ligand>
</feature>
<feature type="binding site" evidence="1">
    <location>
        <begin position="46"/>
        <end position="47"/>
    </location>
    <ligand>
        <name>Fe-coproporphyrin III</name>
        <dbReference type="ChEBI" id="CHEBI:68438"/>
    </ligand>
</feature>
<feature type="binding site" evidence="1">
    <location>
        <position position="54"/>
    </location>
    <ligand>
        <name>Fe-coproporphyrin III</name>
        <dbReference type="ChEBI" id="CHEBI:68438"/>
    </ligand>
</feature>
<feature type="binding site" evidence="1">
    <location>
        <position position="125"/>
    </location>
    <ligand>
        <name>Fe-coproporphyrin III</name>
        <dbReference type="ChEBI" id="CHEBI:68438"/>
    </ligand>
</feature>
<feature type="binding site" evidence="1">
    <location>
        <position position="183"/>
    </location>
    <ligand>
        <name>Fe(2+)</name>
        <dbReference type="ChEBI" id="CHEBI:29033"/>
    </ligand>
</feature>
<feature type="binding site" evidence="1">
    <location>
        <position position="264"/>
    </location>
    <ligand>
        <name>Fe(2+)</name>
        <dbReference type="ChEBI" id="CHEBI:29033"/>
    </ligand>
</feature>
<comment type="function">
    <text evidence="1">Involved in coproporphyrin-dependent heme b biosynthesis. Catalyzes the insertion of ferrous iron into coproporphyrin III to form Fe-coproporphyrin III.</text>
</comment>
<comment type="catalytic activity">
    <reaction evidence="1">
        <text>Fe-coproporphyrin III + 2 H(+) = coproporphyrin III + Fe(2+)</text>
        <dbReference type="Rhea" id="RHEA:49572"/>
        <dbReference type="ChEBI" id="CHEBI:15378"/>
        <dbReference type="ChEBI" id="CHEBI:29033"/>
        <dbReference type="ChEBI" id="CHEBI:68438"/>
        <dbReference type="ChEBI" id="CHEBI:131725"/>
        <dbReference type="EC" id="4.99.1.9"/>
    </reaction>
    <physiologicalReaction direction="right-to-left" evidence="1">
        <dbReference type="Rhea" id="RHEA:49574"/>
    </physiologicalReaction>
</comment>
<comment type="pathway">
    <text evidence="1">Porphyrin-containing compound metabolism; protoheme biosynthesis.</text>
</comment>
<comment type="subcellular location">
    <subcellularLocation>
        <location evidence="1">Cytoplasm</location>
    </subcellularLocation>
</comment>
<comment type="similarity">
    <text evidence="1">Belongs to the ferrochelatase family.</text>
</comment>
<proteinExistence type="inferred from homology"/>
<evidence type="ECO:0000255" key="1">
    <source>
        <dbReference type="HAMAP-Rule" id="MF_00323"/>
    </source>
</evidence>
<reference key="1">
    <citation type="submission" date="2009-06" db="EMBL/GenBank/DDBJ databases">
        <title>Complete sequence of chromosome of Geopacillus sp. WCH70.</title>
        <authorList>
            <consortium name="US DOE Joint Genome Institute"/>
            <person name="Lucas S."/>
            <person name="Copeland A."/>
            <person name="Lapidus A."/>
            <person name="Glavina del Rio T."/>
            <person name="Dalin E."/>
            <person name="Tice H."/>
            <person name="Bruce D."/>
            <person name="Goodwin L."/>
            <person name="Pitluck S."/>
            <person name="Chertkov O."/>
            <person name="Brettin T."/>
            <person name="Detter J.C."/>
            <person name="Han C."/>
            <person name="Larimer F."/>
            <person name="Land M."/>
            <person name="Hauser L."/>
            <person name="Kyrpides N."/>
            <person name="Mikhailova N."/>
            <person name="Brumm P."/>
            <person name="Mead D.A."/>
            <person name="Richardson P."/>
        </authorList>
    </citation>
    <scope>NUCLEOTIDE SEQUENCE [LARGE SCALE GENOMIC DNA]</scope>
    <source>
        <strain>WCH70</strain>
    </source>
</reference>
<keyword id="KW-0963">Cytoplasm</keyword>
<keyword id="KW-0350">Heme biosynthesis</keyword>
<keyword id="KW-0408">Iron</keyword>
<keyword id="KW-0456">Lyase</keyword>
<keyword id="KW-0479">Metal-binding</keyword>
<keyword id="KW-0627">Porphyrin biosynthesis</keyword>
<protein>
    <recommendedName>
        <fullName evidence="1">Coproporphyrin III ferrochelatase</fullName>
        <ecNumber evidence="1">4.99.1.9</ecNumber>
    </recommendedName>
</protein>
<organism>
    <name type="scientific">Geobacillus sp. (strain WCH70)</name>
    <dbReference type="NCBI Taxonomy" id="471223"/>
    <lineage>
        <taxon>Bacteria</taxon>
        <taxon>Bacillati</taxon>
        <taxon>Bacillota</taxon>
        <taxon>Bacilli</taxon>
        <taxon>Bacillales</taxon>
        <taxon>Anoxybacillaceae</taxon>
        <taxon>Geobacillus</taxon>
    </lineage>
</organism>
<name>CPFC_GEOSW</name>
<dbReference type="EC" id="4.99.1.9" evidence="1"/>
<dbReference type="EMBL" id="CP001638">
    <property type="protein sequence ID" value="ACS23543.1"/>
    <property type="molecule type" value="Genomic_DNA"/>
</dbReference>
<dbReference type="SMR" id="C5D6M6"/>
<dbReference type="STRING" id="471223.GWCH70_0650"/>
<dbReference type="KEGG" id="gwc:GWCH70_0650"/>
<dbReference type="eggNOG" id="COG0276">
    <property type="taxonomic scope" value="Bacteria"/>
</dbReference>
<dbReference type="HOGENOM" id="CLU_018884_2_1_9"/>
<dbReference type="OrthoDB" id="9776380at2"/>
<dbReference type="UniPathway" id="UPA00252"/>
<dbReference type="GO" id="GO:0005737">
    <property type="term" value="C:cytoplasm"/>
    <property type="evidence" value="ECO:0007669"/>
    <property type="project" value="UniProtKB-SubCell"/>
</dbReference>
<dbReference type="GO" id="GO:0004325">
    <property type="term" value="F:ferrochelatase activity"/>
    <property type="evidence" value="ECO:0007669"/>
    <property type="project" value="UniProtKB-UniRule"/>
</dbReference>
<dbReference type="GO" id="GO:0046872">
    <property type="term" value="F:metal ion binding"/>
    <property type="evidence" value="ECO:0007669"/>
    <property type="project" value="UniProtKB-KW"/>
</dbReference>
<dbReference type="GO" id="GO:0006783">
    <property type="term" value="P:heme biosynthetic process"/>
    <property type="evidence" value="ECO:0007669"/>
    <property type="project" value="UniProtKB-UniRule"/>
</dbReference>
<dbReference type="CDD" id="cd00419">
    <property type="entry name" value="Ferrochelatase_C"/>
    <property type="match status" value="1"/>
</dbReference>
<dbReference type="CDD" id="cd03411">
    <property type="entry name" value="Ferrochelatase_N"/>
    <property type="match status" value="1"/>
</dbReference>
<dbReference type="FunFam" id="3.40.50.1400:FF:000009">
    <property type="entry name" value="Ferrochelatase"/>
    <property type="match status" value="1"/>
</dbReference>
<dbReference type="Gene3D" id="3.40.50.1400">
    <property type="match status" value="2"/>
</dbReference>
<dbReference type="HAMAP" id="MF_00323">
    <property type="entry name" value="Ferrochelatase"/>
    <property type="match status" value="1"/>
</dbReference>
<dbReference type="InterPro" id="IPR001015">
    <property type="entry name" value="Ferrochelatase"/>
</dbReference>
<dbReference type="InterPro" id="IPR019772">
    <property type="entry name" value="Ferrochelatase_AS"/>
</dbReference>
<dbReference type="InterPro" id="IPR033644">
    <property type="entry name" value="Ferrochelatase_C"/>
</dbReference>
<dbReference type="InterPro" id="IPR033659">
    <property type="entry name" value="Ferrochelatase_N"/>
</dbReference>
<dbReference type="NCBIfam" id="TIGR00109">
    <property type="entry name" value="hemH"/>
    <property type="match status" value="1"/>
</dbReference>
<dbReference type="NCBIfam" id="NF009095">
    <property type="entry name" value="PRK12435.1"/>
    <property type="match status" value="1"/>
</dbReference>
<dbReference type="PANTHER" id="PTHR11108">
    <property type="entry name" value="FERROCHELATASE"/>
    <property type="match status" value="1"/>
</dbReference>
<dbReference type="PANTHER" id="PTHR11108:SF1">
    <property type="entry name" value="FERROCHELATASE, MITOCHONDRIAL"/>
    <property type="match status" value="1"/>
</dbReference>
<dbReference type="Pfam" id="PF00762">
    <property type="entry name" value="Ferrochelatase"/>
    <property type="match status" value="1"/>
</dbReference>
<dbReference type="SUPFAM" id="SSF53800">
    <property type="entry name" value="Chelatase"/>
    <property type="match status" value="1"/>
</dbReference>
<dbReference type="PROSITE" id="PS00534">
    <property type="entry name" value="FERROCHELATASE"/>
    <property type="match status" value="1"/>
</dbReference>
<accession>C5D6M6</accession>